<reference key="1">
    <citation type="journal article" date="1996" name="Science">
        <title>Complete genome sequence of the methanogenic archaeon, Methanococcus jannaschii.</title>
        <authorList>
            <person name="Bult C.J."/>
            <person name="White O."/>
            <person name="Olsen G.J."/>
            <person name="Zhou L."/>
            <person name="Fleischmann R.D."/>
            <person name="Sutton G.G."/>
            <person name="Blake J.A."/>
            <person name="FitzGerald L.M."/>
            <person name="Clayton R.A."/>
            <person name="Gocayne J.D."/>
            <person name="Kerlavage A.R."/>
            <person name="Dougherty B.A."/>
            <person name="Tomb J.-F."/>
            <person name="Adams M.D."/>
            <person name="Reich C.I."/>
            <person name="Overbeek R."/>
            <person name="Kirkness E.F."/>
            <person name="Weinstock K.G."/>
            <person name="Merrick J.M."/>
            <person name="Glodek A."/>
            <person name="Scott J.L."/>
            <person name="Geoghagen N.S.M."/>
            <person name="Weidman J.F."/>
            <person name="Fuhrmann J.L."/>
            <person name="Nguyen D."/>
            <person name="Utterback T.R."/>
            <person name="Kelley J.M."/>
            <person name="Peterson J.D."/>
            <person name="Sadow P.W."/>
            <person name="Hanna M.C."/>
            <person name="Cotton M.D."/>
            <person name="Roberts K.M."/>
            <person name="Hurst M.A."/>
            <person name="Kaine B.P."/>
            <person name="Borodovsky M."/>
            <person name="Klenk H.-P."/>
            <person name="Fraser C.M."/>
            <person name="Smith H.O."/>
            <person name="Woese C.R."/>
            <person name="Venter J.C."/>
        </authorList>
    </citation>
    <scope>NUCLEOTIDE SEQUENCE [LARGE SCALE GENOMIC DNA]</scope>
    <source>
        <strain>ATCC 43067 / DSM 2661 / JAL-1 / JCM 10045 / NBRC 100440</strain>
    </source>
</reference>
<accession>Q57772</accession>
<evidence type="ECO:0000255" key="1"/>
<evidence type="ECO:0000305" key="2"/>
<sequence>MIMKFVEKYFEFEKYGTNLKVETLAGITTFMTMAYIIFVNPQILSTAGMDFGAVMVATCIASAIATLVMGLYARYPFALAPGMGLNAYFTYGVCLGMGIDWRVALGAVFISGVLFIILTLTKIRTWIFNVIPNAIKYGTAVGIGLFIAFIGLKSAGIIVSSKATLVTLGNLMEPSTLLALFGIFLTSILVSRNVIGAILIGIIVTSLIGMILGISPFPEGIFSMPPSIAPTFLQLDIMGALNLGLLTIVLAFFFVDMFDTLGTLSALASQAGYLDKDGKLPRVEKALMADATGTVVGSLLGTSTVTTYIESASGIALGGRTGFVSVVVAMLFLLSLFFYPVVKAIPPYATAAALVIVGALMMRSVKYIDFDDYTEAIPAFITLLTIPLTFSIATGLALGFITYPILKVFTGRWKEVHWLVYVLAVIFALRFVYLSG</sequence>
<comment type="subcellular location">
    <subcellularLocation>
        <location evidence="2">Cell membrane</location>
        <topology evidence="2">Multi-pass membrane protein</topology>
    </subcellularLocation>
</comment>
<comment type="similarity">
    <text evidence="2">Belongs to the nucleobase:cation symporter-2 (NCS2) (TC 2.A.40) family. Azg-like subfamily.</text>
</comment>
<feature type="chain" id="PRO_0000106795" description="Putative permease MJ0326">
    <location>
        <begin position="1"/>
        <end position="436"/>
    </location>
</feature>
<feature type="transmembrane region" description="Helical" evidence="1">
    <location>
        <begin position="24"/>
        <end position="44"/>
    </location>
</feature>
<feature type="transmembrane region" description="Helical" evidence="1">
    <location>
        <begin position="51"/>
        <end position="71"/>
    </location>
</feature>
<feature type="transmembrane region" description="Helical" evidence="1">
    <location>
        <begin position="79"/>
        <end position="99"/>
    </location>
</feature>
<feature type="transmembrane region" description="Helical" evidence="1">
    <location>
        <begin position="103"/>
        <end position="123"/>
    </location>
</feature>
<feature type="transmembrane region" description="Helical" evidence="1">
    <location>
        <begin position="139"/>
        <end position="159"/>
    </location>
</feature>
<feature type="transmembrane region" description="Helical" evidence="1">
    <location>
        <begin position="171"/>
        <end position="191"/>
    </location>
</feature>
<feature type="transmembrane region" description="Helical" evidence="1">
    <location>
        <begin position="194"/>
        <end position="214"/>
    </location>
</feature>
<feature type="transmembrane region" description="Helical" evidence="1">
    <location>
        <begin position="235"/>
        <end position="255"/>
    </location>
</feature>
<feature type="transmembrane region" description="Helical" evidence="1">
    <location>
        <begin position="322"/>
        <end position="342"/>
    </location>
</feature>
<feature type="transmembrane region" description="Helical" evidence="1">
    <location>
        <begin position="345"/>
        <end position="365"/>
    </location>
</feature>
<feature type="transmembrane region" description="Helical" evidence="1">
    <location>
        <begin position="381"/>
        <end position="401"/>
    </location>
</feature>
<feature type="transmembrane region" description="Helical" evidence="1">
    <location>
        <begin position="416"/>
        <end position="436"/>
    </location>
</feature>
<dbReference type="EMBL" id="L77117">
    <property type="protein sequence ID" value="AAB98314.1"/>
    <property type="molecule type" value="Genomic_DNA"/>
</dbReference>
<dbReference type="PIR" id="F64340">
    <property type="entry name" value="F64340"/>
</dbReference>
<dbReference type="SMR" id="Q57772"/>
<dbReference type="FunCoup" id="Q57772">
    <property type="interactions" value="21"/>
</dbReference>
<dbReference type="STRING" id="243232.MJ_0326"/>
<dbReference type="PaxDb" id="243232-MJ_0326"/>
<dbReference type="EnsemblBacteria" id="AAB98314">
    <property type="protein sequence ID" value="AAB98314"/>
    <property type="gene ID" value="MJ_0326"/>
</dbReference>
<dbReference type="KEGG" id="mja:MJ_0326"/>
<dbReference type="eggNOG" id="arCOG02807">
    <property type="taxonomic scope" value="Archaea"/>
</dbReference>
<dbReference type="HOGENOM" id="CLU_024508_0_1_2"/>
<dbReference type="InParanoid" id="Q57772"/>
<dbReference type="PhylomeDB" id="Q57772"/>
<dbReference type="Proteomes" id="UP000000805">
    <property type="component" value="Chromosome"/>
</dbReference>
<dbReference type="GO" id="GO:0005886">
    <property type="term" value="C:plasma membrane"/>
    <property type="evidence" value="ECO:0000318"/>
    <property type="project" value="GO_Central"/>
</dbReference>
<dbReference type="GO" id="GO:0005345">
    <property type="term" value="F:purine nucleobase transmembrane transporter activity"/>
    <property type="evidence" value="ECO:0000318"/>
    <property type="project" value="GO_Central"/>
</dbReference>
<dbReference type="InterPro" id="IPR045018">
    <property type="entry name" value="Azg-like"/>
</dbReference>
<dbReference type="InterPro" id="IPR026033">
    <property type="entry name" value="Azg-like_bact_archaea"/>
</dbReference>
<dbReference type="InterPro" id="IPR006043">
    <property type="entry name" value="NCS2"/>
</dbReference>
<dbReference type="PANTHER" id="PTHR43337">
    <property type="entry name" value="XANTHINE/URACIL PERMEASE C887.17-RELATED"/>
    <property type="match status" value="1"/>
</dbReference>
<dbReference type="PANTHER" id="PTHR43337:SF1">
    <property type="entry name" value="XANTHINE_URACIL PERMEASE C887.17-RELATED"/>
    <property type="match status" value="1"/>
</dbReference>
<dbReference type="Pfam" id="PF00860">
    <property type="entry name" value="Xan_ur_permease"/>
    <property type="match status" value="1"/>
</dbReference>
<dbReference type="PIRSF" id="PIRSF005353">
    <property type="entry name" value="PbuG"/>
    <property type="match status" value="1"/>
</dbReference>
<protein>
    <recommendedName>
        <fullName>Putative permease MJ0326</fullName>
    </recommendedName>
</protein>
<gene>
    <name type="ordered locus">MJ0326</name>
</gene>
<organism>
    <name type="scientific">Methanocaldococcus jannaschii (strain ATCC 43067 / DSM 2661 / JAL-1 / JCM 10045 / NBRC 100440)</name>
    <name type="common">Methanococcus jannaschii</name>
    <dbReference type="NCBI Taxonomy" id="243232"/>
    <lineage>
        <taxon>Archaea</taxon>
        <taxon>Methanobacteriati</taxon>
        <taxon>Methanobacteriota</taxon>
        <taxon>Methanomada group</taxon>
        <taxon>Methanococci</taxon>
        <taxon>Methanococcales</taxon>
        <taxon>Methanocaldococcaceae</taxon>
        <taxon>Methanocaldococcus</taxon>
    </lineage>
</organism>
<keyword id="KW-1003">Cell membrane</keyword>
<keyword id="KW-0472">Membrane</keyword>
<keyword id="KW-1185">Reference proteome</keyword>
<keyword id="KW-0812">Transmembrane</keyword>
<keyword id="KW-1133">Transmembrane helix</keyword>
<keyword id="KW-0813">Transport</keyword>
<name>Y326_METJA</name>
<proteinExistence type="inferred from homology"/>